<keyword id="KW-0963">Cytoplasm</keyword>
<keyword id="KW-0238">DNA-binding</keyword>
<keyword id="KW-1185">Reference proteome</keyword>
<keyword id="KW-0804">Transcription</keyword>
<keyword id="KW-0805">Transcription regulation</keyword>
<name>GCVA_HAEIN</name>
<proteinExistence type="inferred from homology"/>
<reference key="1">
    <citation type="journal article" date="1995" name="Science">
        <title>Whole-genome random sequencing and assembly of Haemophilus influenzae Rd.</title>
        <authorList>
            <person name="Fleischmann R.D."/>
            <person name="Adams M.D."/>
            <person name="White O."/>
            <person name="Clayton R.A."/>
            <person name="Kirkness E.F."/>
            <person name="Kerlavage A.R."/>
            <person name="Bult C.J."/>
            <person name="Tomb J.-F."/>
            <person name="Dougherty B.A."/>
            <person name="Merrick J.M."/>
            <person name="McKenney K."/>
            <person name="Sutton G.G."/>
            <person name="FitzHugh W."/>
            <person name="Fields C.A."/>
            <person name="Gocayne J.D."/>
            <person name="Scott J.D."/>
            <person name="Shirley R."/>
            <person name="Liu L.-I."/>
            <person name="Glodek A."/>
            <person name="Kelley J.M."/>
            <person name="Weidman J.F."/>
            <person name="Phillips C.A."/>
            <person name="Spriggs T."/>
            <person name="Hedblom E."/>
            <person name="Cotton M.D."/>
            <person name="Utterback T.R."/>
            <person name="Hanna M.C."/>
            <person name="Nguyen D.T."/>
            <person name="Saudek D.M."/>
            <person name="Brandon R.C."/>
            <person name="Fine L.D."/>
            <person name="Fritchman J.L."/>
            <person name="Fuhrmann J.L."/>
            <person name="Geoghagen N.S.M."/>
            <person name="Gnehm C.L."/>
            <person name="McDonald L.A."/>
            <person name="Small K.V."/>
            <person name="Fraser C.M."/>
            <person name="Smith H.O."/>
            <person name="Venter J.C."/>
        </authorList>
    </citation>
    <scope>NUCLEOTIDE SEQUENCE [LARGE SCALE GENOMIC DNA]</scope>
    <source>
        <strain>ATCC 51907 / DSM 11121 / KW20 / Rd</strain>
    </source>
</reference>
<sequence>MEILMYKRLPPLNSLKSFESAARYLSFTKAADELCVTQAAVSHQIKLLEXFLGIDLFKRKNRSLELTELGKAYFVDINKILRRLNEATERLLTLKTDPHLNISVPQTFGIQWLVPHLSEFNQLYPQIEVRLTGVDQDEGLLNKEIDLAIYYGLGNWQNLQVDRLCEENLLILASPELLAENPIIQPEDLKKHTLIHIHTCDNWQAMANHLQLDDLNIQQGPLFSHTFMALQAAIHGQGIVLANRLLALQEIENGSLQAVLPTNLPDPKSFYVVNHLDRLDDQKIQAFRQWIINSIKQEENE</sequence>
<evidence type="ECO:0000255" key="1">
    <source>
        <dbReference type="PROSITE-ProRule" id="PRU00253"/>
    </source>
</evidence>
<evidence type="ECO:0000305" key="2"/>
<dbReference type="EMBL" id="L42023">
    <property type="protein sequence ID" value="AAC22848.1"/>
    <property type="molecule type" value="Genomic_DNA"/>
</dbReference>
<dbReference type="PIR" id="B64189">
    <property type="entry name" value="B64189"/>
</dbReference>
<dbReference type="RefSeq" id="NP_439350.1">
    <property type="nucleotide sequence ID" value="NC_000907.1"/>
</dbReference>
<dbReference type="STRING" id="71421.HI_1194"/>
<dbReference type="EnsemblBacteria" id="AAC22848">
    <property type="protein sequence ID" value="AAC22848"/>
    <property type="gene ID" value="HI_1194"/>
</dbReference>
<dbReference type="KEGG" id="hin:HI_1194"/>
<dbReference type="PATRIC" id="fig|71421.8.peg.1246"/>
<dbReference type="eggNOG" id="COG0583">
    <property type="taxonomic scope" value="Bacteria"/>
</dbReference>
<dbReference type="HOGENOM" id="CLU_039613_37_0_6"/>
<dbReference type="OrthoDB" id="5526340at2"/>
<dbReference type="PhylomeDB" id="P45099"/>
<dbReference type="Proteomes" id="UP000000579">
    <property type="component" value="Chromosome"/>
</dbReference>
<dbReference type="GO" id="GO:0005737">
    <property type="term" value="C:cytoplasm"/>
    <property type="evidence" value="ECO:0007669"/>
    <property type="project" value="UniProtKB-SubCell"/>
</dbReference>
<dbReference type="GO" id="GO:0003700">
    <property type="term" value="F:DNA-binding transcription factor activity"/>
    <property type="evidence" value="ECO:0000318"/>
    <property type="project" value="GO_Central"/>
</dbReference>
<dbReference type="GO" id="GO:0043565">
    <property type="term" value="F:sequence-specific DNA binding"/>
    <property type="evidence" value="ECO:0000318"/>
    <property type="project" value="GO_Central"/>
</dbReference>
<dbReference type="GO" id="GO:0006351">
    <property type="term" value="P:DNA-templated transcription"/>
    <property type="evidence" value="ECO:0000318"/>
    <property type="project" value="GO_Central"/>
</dbReference>
<dbReference type="CDD" id="cd08432">
    <property type="entry name" value="PBP2_GcdR_TrpI_HvrB_AmpR_like"/>
    <property type="match status" value="1"/>
</dbReference>
<dbReference type="FunFam" id="1.10.10.10:FF:000038">
    <property type="entry name" value="Glycine cleavage system transcriptional activator"/>
    <property type="match status" value="1"/>
</dbReference>
<dbReference type="FunFam" id="3.40.190.10:FF:000017">
    <property type="entry name" value="Glycine cleavage system transcriptional activator"/>
    <property type="match status" value="1"/>
</dbReference>
<dbReference type="Gene3D" id="3.40.190.10">
    <property type="entry name" value="Periplasmic binding protein-like II"/>
    <property type="match status" value="2"/>
</dbReference>
<dbReference type="Gene3D" id="1.10.10.10">
    <property type="entry name" value="Winged helix-like DNA-binding domain superfamily/Winged helix DNA-binding domain"/>
    <property type="match status" value="1"/>
</dbReference>
<dbReference type="InterPro" id="IPR005119">
    <property type="entry name" value="LysR_subst-bd"/>
</dbReference>
<dbReference type="InterPro" id="IPR000847">
    <property type="entry name" value="Tscrpt_reg_HTH_LysR"/>
</dbReference>
<dbReference type="InterPro" id="IPR036388">
    <property type="entry name" value="WH-like_DNA-bd_sf"/>
</dbReference>
<dbReference type="InterPro" id="IPR036390">
    <property type="entry name" value="WH_DNA-bd_sf"/>
</dbReference>
<dbReference type="NCBIfam" id="NF008352">
    <property type="entry name" value="PRK11139.1"/>
    <property type="match status" value="1"/>
</dbReference>
<dbReference type="PANTHER" id="PTHR30537:SF26">
    <property type="entry name" value="GLYCINE CLEAVAGE SYSTEM TRANSCRIPTIONAL ACTIVATOR"/>
    <property type="match status" value="1"/>
</dbReference>
<dbReference type="PANTHER" id="PTHR30537">
    <property type="entry name" value="HTH-TYPE TRANSCRIPTIONAL REGULATOR"/>
    <property type="match status" value="1"/>
</dbReference>
<dbReference type="Pfam" id="PF00126">
    <property type="entry name" value="HTH_1"/>
    <property type="match status" value="1"/>
</dbReference>
<dbReference type="Pfam" id="PF03466">
    <property type="entry name" value="LysR_substrate"/>
    <property type="match status" value="1"/>
</dbReference>
<dbReference type="PRINTS" id="PR00039">
    <property type="entry name" value="HTHLYSR"/>
</dbReference>
<dbReference type="SUPFAM" id="SSF53850">
    <property type="entry name" value="Periplasmic binding protein-like II"/>
    <property type="match status" value="1"/>
</dbReference>
<dbReference type="SUPFAM" id="SSF46785">
    <property type="entry name" value="Winged helix' DNA-binding domain"/>
    <property type="match status" value="1"/>
</dbReference>
<dbReference type="PROSITE" id="PS50931">
    <property type="entry name" value="HTH_LYSR"/>
    <property type="match status" value="1"/>
</dbReference>
<accession>P45099</accession>
<feature type="chain" id="PRO_0000105628" description="Glycine cleavage system transcriptional activator homolog">
    <location>
        <begin position="1"/>
        <end position="301"/>
    </location>
</feature>
<feature type="domain" description="HTH lysR-type" evidence="1">
    <location>
        <begin position="10"/>
        <end position="67"/>
    </location>
</feature>
<feature type="DNA-binding region" description="H-T-H motif" evidence="1">
    <location>
        <begin position="27"/>
        <end position="46"/>
    </location>
</feature>
<organism>
    <name type="scientific">Haemophilus influenzae (strain ATCC 51907 / DSM 11121 / KW20 / Rd)</name>
    <dbReference type="NCBI Taxonomy" id="71421"/>
    <lineage>
        <taxon>Bacteria</taxon>
        <taxon>Pseudomonadati</taxon>
        <taxon>Pseudomonadota</taxon>
        <taxon>Gammaproteobacteria</taxon>
        <taxon>Pasteurellales</taxon>
        <taxon>Pasteurellaceae</taxon>
        <taxon>Haemophilus</taxon>
    </lineage>
</organism>
<protein>
    <recommendedName>
        <fullName>Glycine cleavage system transcriptional activator homolog</fullName>
    </recommendedName>
</protein>
<gene>
    <name type="primary">gcvA</name>
    <name type="ordered locus">HI_1194</name>
</gene>
<comment type="function">
    <text>Not known, the gcv operon regulated by the E.coli homolog does not exist in H.influenzae, so it probably acts as a transcriptional regulator on some other operon.</text>
</comment>
<comment type="subcellular location">
    <subcellularLocation>
        <location>Cytoplasm</location>
    </subcellularLocation>
</comment>
<comment type="similarity">
    <text evidence="2">Belongs to the LysR transcriptional regulatory family.</text>
</comment>